<feature type="signal peptide" evidence="2">
    <location>
        <begin position="1"/>
        <end position="32"/>
    </location>
</feature>
<feature type="chain" id="PRO_0000438217" description="Berberine bridge enzyme-like 24">
    <location>
        <begin position="33"/>
        <end position="541"/>
    </location>
</feature>
<feature type="domain" description="FAD-binding PCMH-type" evidence="4">
    <location>
        <begin position="83"/>
        <end position="259"/>
    </location>
</feature>
<feature type="glycosylation site" description="N-linked (GlcNAc...) asparagine" evidence="3">
    <location>
        <position position="62"/>
    </location>
</feature>
<feature type="glycosylation site" description="N-linked (GlcNAc...) asparagine" evidence="3">
    <location>
        <position position="309"/>
    </location>
</feature>
<feature type="glycosylation site" description="N-linked (GlcNAc...) asparagine" evidence="3">
    <location>
        <position position="408"/>
    </location>
</feature>
<feature type="glycosylation site" description="N-linked (GlcNAc...) asparagine" evidence="3">
    <location>
        <position position="435"/>
    </location>
</feature>
<feature type="disulfide bond" evidence="1">
    <location>
        <begin position="41"/>
        <end position="105"/>
    </location>
</feature>
<feature type="cross-link" description="6-(S-cysteinyl)-8alpha-(pros-histidyl)-FAD (His-Cys)" evidence="1">
    <location>
        <begin position="120"/>
        <end position="184"/>
    </location>
</feature>
<reference key="1">
    <citation type="journal article" date="1998" name="DNA Res.">
        <title>Structural analysis of Arabidopsis thaliana chromosome 5. V. Sequence features of the regions of 1,381,565 bp covered by twenty one physically assigned P1 and TAC clones.</title>
        <authorList>
            <person name="Kaneko T."/>
            <person name="Kotani H."/>
            <person name="Nakamura Y."/>
            <person name="Sato S."/>
            <person name="Asamizu E."/>
            <person name="Miyajima N."/>
            <person name="Tabata S."/>
        </authorList>
    </citation>
    <scope>NUCLEOTIDE SEQUENCE [LARGE SCALE GENOMIC DNA]</scope>
    <source>
        <strain>cv. Columbia</strain>
    </source>
</reference>
<reference key="2">
    <citation type="journal article" date="2017" name="Plant J.">
        <title>Araport11: a complete reannotation of the Arabidopsis thaliana reference genome.</title>
        <authorList>
            <person name="Cheng C.Y."/>
            <person name="Krishnakumar V."/>
            <person name="Chan A.P."/>
            <person name="Thibaud-Nissen F."/>
            <person name="Schobel S."/>
            <person name="Town C.D."/>
        </authorList>
    </citation>
    <scope>GENOME REANNOTATION</scope>
    <source>
        <strain>cv. Columbia</strain>
    </source>
</reference>
<reference key="3">
    <citation type="journal article" date="2003" name="Science">
        <title>Empirical analysis of transcriptional activity in the Arabidopsis genome.</title>
        <authorList>
            <person name="Yamada K."/>
            <person name="Lim J."/>
            <person name="Dale J.M."/>
            <person name="Chen H."/>
            <person name="Shinn P."/>
            <person name="Palm C.J."/>
            <person name="Southwick A.M."/>
            <person name="Wu H.C."/>
            <person name="Kim C.J."/>
            <person name="Nguyen M."/>
            <person name="Pham P.K."/>
            <person name="Cheuk R.F."/>
            <person name="Karlin-Newmann G."/>
            <person name="Liu S.X."/>
            <person name="Lam B."/>
            <person name="Sakano H."/>
            <person name="Wu T."/>
            <person name="Yu G."/>
            <person name="Miranda M."/>
            <person name="Quach H.L."/>
            <person name="Tripp M."/>
            <person name="Chang C.H."/>
            <person name="Lee J.M."/>
            <person name="Toriumi M.J."/>
            <person name="Chan M.M."/>
            <person name="Tang C.C."/>
            <person name="Onodera C.S."/>
            <person name="Deng J.M."/>
            <person name="Akiyama K."/>
            <person name="Ansari Y."/>
            <person name="Arakawa T."/>
            <person name="Banh J."/>
            <person name="Banno F."/>
            <person name="Bowser L."/>
            <person name="Brooks S.Y."/>
            <person name="Carninci P."/>
            <person name="Chao Q."/>
            <person name="Choy N."/>
            <person name="Enju A."/>
            <person name="Goldsmith A.D."/>
            <person name="Gurjal M."/>
            <person name="Hansen N.F."/>
            <person name="Hayashizaki Y."/>
            <person name="Johnson-Hopson C."/>
            <person name="Hsuan V.W."/>
            <person name="Iida K."/>
            <person name="Karnes M."/>
            <person name="Khan S."/>
            <person name="Koesema E."/>
            <person name="Ishida J."/>
            <person name="Jiang P.X."/>
            <person name="Jones T."/>
            <person name="Kawai J."/>
            <person name="Kamiya A."/>
            <person name="Meyers C."/>
            <person name="Nakajima M."/>
            <person name="Narusaka M."/>
            <person name="Seki M."/>
            <person name="Sakurai T."/>
            <person name="Satou M."/>
            <person name="Tamse R."/>
            <person name="Vaysberg M."/>
            <person name="Wallender E.K."/>
            <person name="Wong C."/>
            <person name="Yamamura Y."/>
            <person name="Yuan S."/>
            <person name="Shinozaki K."/>
            <person name="Davis R.W."/>
            <person name="Theologis A."/>
            <person name="Ecker J.R."/>
        </authorList>
    </citation>
    <scope>NUCLEOTIDE SEQUENCE [LARGE SCALE MRNA]</scope>
    <source>
        <strain>cv. Columbia</strain>
    </source>
</reference>
<reference key="4">
    <citation type="submission" date="2006-07" db="EMBL/GenBank/DDBJ databases">
        <title>Large-scale analysis of RIKEN Arabidopsis full-length (RAFL) cDNAs.</title>
        <authorList>
            <person name="Totoki Y."/>
            <person name="Seki M."/>
            <person name="Ishida J."/>
            <person name="Nakajima M."/>
            <person name="Enju A."/>
            <person name="Kamiya A."/>
            <person name="Narusaka M."/>
            <person name="Shin-i T."/>
            <person name="Nakagawa M."/>
            <person name="Sakamoto N."/>
            <person name="Oishi K."/>
            <person name="Kohara Y."/>
            <person name="Kobayashi M."/>
            <person name="Toyoda A."/>
            <person name="Sakaki Y."/>
            <person name="Sakurai T."/>
            <person name="Iida K."/>
            <person name="Akiyama K."/>
            <person name="Satou M."/>
            <person name="Toyoda T."/>
            <person name="Konagaya A."/>
            <person name="Carninci P."/>
            <person name="Kawai J."/>
            <person name="Hayashizaki Y."/>
            <person name="Shinozaki K."/>
        </authorList>
    </citation>
    <scope>NUCLEOTIDE SEQUENCE [LARGE SCALE MRNA]</scope>
    <source>
        <strain>cv. Columbia</strain>
    </source>
</reference>
<reference key="5">
    <citation type="journal article" date="2015" name="J. Biol. Chem.">
        <title>Oxidation of monolignols by members of the berberine bridge enzyme family suggests a role in plant cell wall metabolism.</title>
        <authorList>
            <person name="Daniel B."/>
            <person name="Pavkov-Keller T."/>
            <person name="Steiner B."/>
            <person name="Dordic A."/>
            <person name="Gutmann A."/>
            <person name="Nidetzky B."/>
            <person name="Sensen C.W."/>
            <person name="van der Graaff E."/>
            <person name="Wallner S."/>
            <person name="Gruber K."/>
            <person name="Macheroux P."/>
        </authorList>
    </citation>
    <scope>GENE FAMILY</scope>
    <scope>NOMENCLATURE</scope>
</reference>
<dbReference type="EC" id="1.1.1.-" evidence="1"/>
<dbReference type="EMBL" id="AB011475">
    <property type="protein sequence ID" value="BAB10123.1"/>
    <property type="molecule type" value="Genomic_DNA"/>
</dbReference>
<dbReference type="EMBL" id="CP002688">
    <property type="protein sequence ID" value="AED95103.1"/>
    <property type="molecule type" value="Genomic_DNA"/>
</dbReference>
<dbReference type="EMBL" id="AY093127">
    <property type="protein sequence ID" value="AAM13126.1"/>
    <property type="molecule type" value="mRNA"/>
</dbReference>
<dbReference type="EMBL" id="AK220778">
    <property type="protein sequence ID" value="BAD93999.1"/>
    <property type="status" value="ALT_INIT"/>
    <property type="molecule type" value="mRNA"/>
</dbReference>
<dbReference type="EMBL" id="AK226516">
    <property type="protein sequence ID" value="BAE98656.1"/>
    <property type="molecule type" value="mRNA"/>
</dbReference>
<dbReference type="RefSeq" id="NP_199251.1">
    <property type="nucleotide sequence ID" value="NM_123805.5"/>
</dbReference>
<dbReference type="SMR" id="Q9FKV0"/>
<dbReference type="FunCoup" id="Q9FKV0">
    <property type="interactions" value="33"/>
</dbReference>
<dbReference type="STRING" id="3702.Q9FKV0"/>
<dbReference type="GlyGen" id="Q9FKV0">
    <property type="glycosylation" value="5 sites"/>
</dbReference>
<dbReference type="SwissPalm" id="Q9FKV0"/>
<dbReference type="PaxDb" id="3702-AT5G44380.1"/>
<dbReference type="ProteomicsDB" id="241202"/>
<dbReference type="EnsemblPlants" id="AT5G44380.1">
    <property type="protein sequence ID" value="AT5G44380.1"/>
    <property type="gene ID" value="AT5G44380"/>
</dbReference>
<dbReference type="GeneID" id="834464"/>
<dbReference type="Gramene" id="AT5G44380.1">
    <property type="protein sequence ID" value="AT5G44380.1"/>
    <property type="gene ID" value="AT5G44380"/>
</dbReference>
<dbReference type="KEGG" id="ath:AT5G44380"/>
<dbReference type="Araport" id="AT5G44380"/>
<dbReference type="TAIR" id="AT5G44380">
    <property type="gene designation" value="ATBBE24"/>
</dbReference>
<dbReference type="eggNOG" id="ENOG502QQWK">
    <property type="taxonomic scope" value="Eukaryota"/>
</dbReference>
<dbReference type="HOGENOM" id="CLU_018354_6_0_1"/>
<dbReference type="InParanoid" id="Q9FKV0"/>
<dbReference type="OrthoDB" id="407275at2759"/>
<dbReference type="PhylomeDB" id="Q9FKV0"/>
<dbReference type="CD-CODE" id="4299E36E">
    <property type="entry name" value="Nucleolus"/>
</dbReference>
<dbReference type="PRO" id="PR:Q9FKV0"/>
<dbReference type="Proteomes" id="UP000006548">
    <property type="component" value="Chromosome 5"/>
</dbReference>
<dbReference type="ExpressionAtlas" id="Q9FKV0">
    <property type="expression patterns" value="baseline and differential"/>
</dbReference>
<dbReference type="GO" id="GO:0005576">
    <property type="term" value="C:extracellular region"/>
    <property type="evidence" value="ECO:0007669"/>
    <property type="project" value="UniProtKB-KW"/>
</dbReference>
<dbReference type="GO" id="GO:0009506">
    <property type="term" value="C:plasmodesma"/>
    <property type="evidence" value="ECO:0007005"/>
    <property type="project" value="TAIR"/>
</dbReference>
<dbReference type="GO" id="GO:0071949">
    <property type="term" value="F:FAD binding"/>
    <property type="evidence" value="ECO:0007669"/>
    <property type="project" value="InterPro"/>
</dbReference>
<dbReference type="GO" id="GO:0016491">
    <property type="term" value="F:oxidoreductase activity"/>
    <property type="evidence" value="ECO:0007669"/>
    <property type="project" value="UniProtKB-KW"/>
</dbReference>
<dbReference type="GO" id="GO:0006979">
    <property type="term" value="P:response to oxidative stress"/>
    <property type="evidence" value="ECO:0000270"/>
    <property type="project" value="TAIR"/>
</dbReference>
<dbReference type="FunFam" id="3.30.43.10:FF:000004">
    <property type="entry name" value="Berberine bridge enzyme-like 15"/>
    <property type="match status" value="1"/>
</dbReference>
<dbReference type="Gene3D" id="3.30.465.10">
    <property type="match status" value="1"/>
</dbReference>
<dbReference type="Gene3D" id="3.40.462.20">
    <property type="match status" value="1"/>
</dbReference>
<dbReference type="Gene3D" id="3.30.43.10">
    <property type="entry name" value="Uridine Diphospho-n-acetylenolpyruvylglucosamine Reductase, domain 2"/>
    <property type="match status" value="1"/>
</dbReference>
<dbReference type="InterPro" id="IPR012951">
    <property type="entry name" value="BBE"/>
</dbReference>
<dbReference type="InterPro" id="IPR016166">
    <property type="entry name" value="FAD-bd_PCMH"/>
</dbReference>
<dbReference type="InterPro" id="IPR036318">
    <property type="entry name" value="FAD-bd_PCMH-like_sf"/>
</dbReference>
<dbReference type="InterPro" id="IPR016167">
    <property type="entry name" value="FAD-bd_PCMH_sub1"/>
</dbReference>
<dbReference type="InterPro" id="IPR016169">
    <property type="entry name" value="FAD-bd_PCMH_sub2"/>
</dbReference>
<dbReference type="InterPro" id="IPR006094">
    <property type="entry name" value="Oxid_FAD_bind_N"/>
</dbReference>
<dbReference type="PANTHER" id="PTHR32448">
    <property type="entry name" value="OS08G0158400 PROTEIN"/>
    <property type="match status" value="1"/>
</dbReference>
<dbReference type="Pfam" id="PF08031">
    <property type="entry name" value="BBE"/>
    <property type="match status" value="1"/>
</dbReference>
<dbReference type="Pfam" id="PF01565">
    <property type="entry name" value="FAD_binding_4"/>
    <property type="match status" value="1"/>
</dbReference>
<dbReference type="SUPFAM" id="SSF56176">
    <property type="entry name" value="FAD-binding/transporter-associated domain-like"/>
    <property type="match status" value="1"/>
</dbReference>
<dbReference type="PROSITE" id="PS51387">
    <property type="entry name" value="FAD_PCMH"/>
    <property type="match status" value="1"/>
</dbReference>
<proteinExistence type="evidence at transcript level"/>
<accession>Q9FKV0</accession>
<accession>Q570D1</accession>
<sequence length="541" mass="60616">MGNSKPLPTISCIIVSVLYFSFYCITPTSSSASIQDQFINCVKRNTHVSFPLEKTLFTPAKNVSLFNQVLESTAQNLQFLAKSMPKPGFIFRPIHQSQVQASIICSKKLGIHFRVRSGGHDFEALSYVSRIEKPFILLDLSKLKQINVDIESNSAWVQPGATLGELYYRIAEKSKIHGFPAGLCTSVGIGGYMTGGGYGTLMRKYGLAGDNVLDVKMVDANGKLLDRAAMGEDLFWAIRGGGGASFGIVLAWKIKLVPVPKTVTVFTVTKTLEQDARLKTISKWQQISSKIIEEIHIRVVLRAAGNDGNKTVTMTYLGQFLGEKGTLLKVMEKAFPELGLTQKDCTEMSWIEAALFHGGFPTGSPIEILLQLKSPLGKDYFKATSDFVKEPIPVIGLKGIFKRLIEGNTTFLNWTPYGGMMSKIPESAIPFPHRNGTLFKILYYANWLENDKTSSRKINWIKEIYNYMAPYVSSNPRQAYVNYRDLDFGQNKNNAKVNFIEAKIWGPKYFKGNFDRLVKIKTKVDPENFFRHEQSIPPMPY</sequence>
<protein>
    <recommendedName>
        <fullName evidence="5">Berberine bridge enzyme-like 24</fullName>
        <shortName evidence="5">AtBBE-like 24</shortName>
        <ecNumber evidence="1">1.1.1.-</ecNumber>
    </recommendedName>
</protein>
<name>BBE24_ARATH</name>
<comment type="cofactor">
    <cofactor evidence="1">
        <name>FAD</name>
        <dbReference type="ChEBI" id="CHEBI:57692"/>
    </cofactor>
    <text evidence="1">Binds 1 FAD per subunit in a bicovalent manner.</text>
</comment>
<comment type="subcellular location">
    <subcellularLocation>
        <location evidence="1">Secreted</location>
        <location evidence="1">Cell wall</location>
    </subcellularLocation>
</comment>
<comment type="PTM">
    <text evidence="1">The FAD cofactor is bound via a bicovalent 6-S-cysteinyl, 8alpha-N1-histidyl FAD linkage.</text>
</comment>
<comment type="similarity">
    <text evidence="6">Belongs to the oxygen-dependent FAD-linked oxidoreductase family.</text>
</comment>
<comment type="sequence caution" evidence="6">
    <conflict type="erroneous initiation">
        <sequence resource="EMBL-CDS" id="BAD93999"/>
    </conflict>
    <text>Truncated N-terminus.</text>
</comment>
<organism>
    <name type="scientific">Arabidopsis thaliana</name>
    <name type="common">Mouse-ear cress</name>
    <dbReference type="NCBI Taxonomy" id="3702"/>
    <lineage>
        <taxon>Eukaryota</taxon>
        <taxon>Viridiplantae</taxon>
        <taxon>Streptophyta</taxon>
        <taxon>Embryophyta</taxon>
        <taxon>Tracheophyta</taxon>
        <taxon>Spermatophyta</taxon>
        <taxon>Magnoliopsida</taxon>
        <taxon>eudicotyledons</taxon>
        <taxon>Gunneridae</taxon>
        <taxon>Pentapetalae</taxon>
        <taxon>rosids</taxon>
        <taxon>malvids</taxon>
        <taxon>Brassicales</taxon>
        <taxon>Brassicaceae</taxon>
        <taxon>Camelineae</taxon>
        <taxon>Arabidopsis</taxon>
    </lineage>
</organism>
<keyword id="KW-0134">Cell wall</keyword>
<keyword id="KW-1015">Disulfide bond</keyword>
<keyword id="KW-0274">FAD</keyword>
<keyword id="KW-0285">Flavoprotein</keyword>
<keyword id="KW-0325">Glycoprotein</keyword>
<keyword id="KW-0547">Nucleotide-binding</keyword>
<keyword id="KW-0560">Oxidoreductase</keyword>
<keyword id="KW-1185">Reference proteome</keyword>
<keyword id="KW-0964">Secreted</keyword>
<keyword id="KW-0732">Signal</keyword>
<evidence type="ECO:0000250" key="1">
    <source>
        <dbReference type="UniProtKB" id="O64743"/>
    </source>
</evidence>
<evidence type="ECO:0000255" key="2"/>
<evidence type="ECO:0000255" key="3">
    <source>
        <dbReference type="PROSITE-ProRule" id="PRU00498"/>
    </source>
</evidence>
<evidence type="ECO:0000255" key="4">
    <source>
        <dbReference type="PROSITE-ProRule" id="PRU00718"/>
    </source>
</evidence>
<evidence type="ECO:0000303" key="5">
    <source>
    </source>
</evidence>
<evidence type="ECO:0000305" key="6"/>
<evidence type="ECO:0000312" key="7">
    <source>
        <dbReference type="Araport" id="AT5G44380"/>
    </source>
</evidence>
<evidence type="ECO:0000312" key="8">
    <source>
        <dbReference type="EMBL" id="BAB10123.1"/>
    </source>
</evidence>
<gene>
    <name evidence="7" type="ordered locus">At5g44380</name>
    <name evidence="8" type="ORF">K9L2.18</name>
</gene>